<sequence length="161" mass="18472">QLLILCLVTVINSENSTDNSTENTIENEIENATETELSEAIENETENVTETELSEAIENETENVTETELPEIIENETKIEALNLPQNPKQKYCKSEGQYCSRTIFHRCCGNLVCQLHGFFNGTCVQCLAERKFCIWSSECCSKRCRLFRCRKNPYVQVIPY</sequence>
<accession>Q5BX25</accession>
<feature type="signal peptide" evidence="1">
    <location>
        <begin position="1" status="less than"/>
        <end position="13"/>
    </location>
</feature>
<feature type="chain" id="PRO_0000311411" description="UPF0506 protein SJCHGC02965">
    <location>
        <begin position="14"/>
        <end position="161"/>
    </location>
</feature>
<feature type="glycosylation site" description="N-linked (GlcNAc...) asparagine" evidence="1">
    <location>
        <position position="15"/>
    </location>
</feature>
<feature type="glycosylation site" description="N-linked (GlcNAc...) asparagine" evidence="1">
    <location>
        <position position="19"/>
    </location>
</feature>
<feature type="glycosylation site" description="N-linked (GlcNAc...) asparagine" evidence="1">
    <location>
        <position position="31"/>
    </location>
</feature>
<feature type="glycosylation site" description="N-linked (GlcNAc...) asparagine" evidence="1">
    <location>
        <position position="43"/>
    </location>
</feature>
<feature type="glycosylation site" description="N-linked (GlcNAc...) asparagine" evidence="1">
    <location>
        <position position="47"/>
    </location>
</feature>
<feature type="glycosylation site" description="N-linked (GlcNAc...) asparagine" evidence="1">
    <location>
        <position position="59"/>
    </location>
</feature>
<feature type="glycosylation site" description="N-linked (GlcNAc...) asparagine" evidence="1">
    <location>
        <position position="63"/>
    </location>
</feature>
<feature type="glycosylation site" description="N-linked (GlcNAc...) asparagine" evidence="1">
    <location>
        <position position="75"/>
    </location>
</feature>
<feature type="glycosylation site" description="N-linked (GlcNAc...) asparagine" evidence="1">
    <location>
        <position position="121"/>
    </location>
</feature>
<feature type="disulfide bond" evidence="2">
    <location>
        <begin position="127"/>
        <end position="141"/>
    </location>
</feature>
<feature type="disulfide bond" evidence="2">
    <location>
        <begin position="134"/>
        <end position="145"/>
    </location>
</feature>
<feature type="disulfide bond" evidence="2">
    <location>
        <begin position="140"/>
        <end position="150"/>
    </location>
</feature>
<feature type="non-terminal residue">
    <location>
        <position position="1"/>
    </location>
</feature>
<reference key="1">
    <citation type="journal article" date="2006" name="PLoS Pathog.">
        <title>New perspectives on host-parasite interplay by comparative transcriptomic and proteomic analyses of Schistosoma japonicum.</title>
        <authorList>
            <person name="Liu F."/>
            <person name="Lu J."/>
            <person name="Hu W."/>
            <person name="Wang S.-Y."/>
            <person name="Cui S.-J."/>
            <person name="Chi M."/>
            <person name="Yan Q."/>
            <person name="Wang X.-R."/>
            <person name="Song H.-D."/>
            <person name="Xu X.-N."/>
            <person name="Wang J.-J."/>
            <person name="Zhang X.-L."/>
            <person name="Zhang X."/>
            <person name="Wang Z.-Q."/>
            <person name="Xue C.-L."/>
            <person name="Brindley P.J."/>
            <person name="McManus D.P."/>
            <person name="Yang P.-Y."/>
            <person name="Feng Z."/>
            <person name="Chen Z."/>
            <person name="Han Z.-G."/>
        </authorList>
    </citation>
    <scope>NUCLEOTIDE SEQUENCE [LARGE SCALE MRNA]</scope>
</reference>
<gene>
    <name type="ORF">SJCHGC02965</name>
</gene>
<dbReference type="EMBL" id="AY812161">
    <property type="protein sequence ID" value="AAX28050.2"/>
    <property type="molecule type" value="mRNA"/>
</dbReference>
<dbReference type="SMR" id="Q5BX25"/>
<dbReference type="GO" id="GO:0005576">
    <property type="term" value="C:extracellular region"/>
    <property type="evidence" value="ECO:0007669"/>
    <property type="project" value="UniProtKB-SubCell"/>
</dbReference>
<dbReference type="InterPro" id="IPR021712">
    <property type="entry name" value="UPF0506"/>
</dbReference>
<dbReference type="Pfam" id="PF11703">
    <property type="entry name" value="UPF0506"/>
    <property type="match status" value="1"/>
</dbReference>
<name>SJ965_SCHJA</name>
<organism>
    <name type="scientific">Schistosoma japonicum</name>
    <name type="common">Blood fluke</name>
    <dbReference type="NCBI Taxonomy" id="6182"/>
    <lineage>
        <taxon>Eukaryota</taxon>
        <taxon>Metazoa</taxon>
        <taxon>Spiralia</taxon>
        <taxon>Lophotrochozoa</taxon>
        <taxon>Platyhelminthes</taxon>
        <taxon>Trematoda</taxon>
        <taxon>Digenea</taxon>
        <taxon>Strigeidida</taxon>
        <taxon>Schistosomatoidea</taxon>
        <taxon>Schistosomatidae</taxon>
        <taxon>Schistosoma</taxon>
    </lineage>
</organism>
<proteinExistence type="evidence at transcript level"/>
<keyword id="KW-1015">Disulfide bond</keyword>
<keyword id="KW-0325">Glycoprotein</keyword>
<keyword id="KW-0960">Knottin</keyword>
<keyword id="KW-0964">Secreted</keyword>
<keyword id="KW-0732">Signal</keyword>
<evidence type="ECO:0000255" key="1"/>
<evidence type="ECO:0000305" key="2"/>
<protein>
    <recommendedName>
        <fullName>UPF0506 protein SJCHGC02965</fullName>
    </recommendedName>
</protein>
<comment type="subcellular location">
    <subcellularLocation>
        <location evidence="2">Secreted</location>
    </subcellularLocation>
</comment>
<comment type="domain">
    <text evidence="2">The presence of a 'disulfide through disulfide knot' structurally defines this protein as a knottin.</text>
</comment>
<comment type="similarity">
    <text evidence="2">Belongs to the UPF0506 family.</text>
</comment>